<evidence type="ECO:0000250" key="1">
    <source>
        <dbReference type="UniProtKB" id="P42743"/>
    </source>
</evidence>
<evidence type="ECO:0000255" key="2">
    <source>
        <dbReference type="PROSITE-ProRule" id="PRU00388"/>
    </source>
</evidence>
<evidence type="ECO:0000256" key="3">
    <source>
        <dbReference type="SAM" id="MobiDB-lite"/>
    </source>
</evidence>
<evidence type="ECO:0000305" key="4"/>
<gene>
    <name type="primary">UBC26</name>
    <name type="ordered locus">At1g53025</name>
    <name type="ORF">F8L10.11</name>
    <name type="ORF">F8L10.22</name>
</gene>
<sequence length="543" mass="60552">MEPDVVEIPPPPLIASGSRTRKPRKAVPEVIDVESYEFRNVGVVKDNNVVDKKNKGKAIQVDSFSFNNVQSHHHGSSLLNLETFQDYYGHKNIPFSEFANQPIDVDDYSMYQDVLDPKDVPAGAEVTVPWGLNSSSKGTAKSSISIMRSQSMKGYGTVSLATTNVPQLWDYTLPQQNQAIYSSVSFSAVQPQTPDVVMVTNPTPNPFSYDASASSSHPIAAEPISSVQDSSNARKLKEEFLRDFKRFDTVEDFSDHHYASKGKSSKQHSKNWVKKVQADWKILENDLPEAISVRACESRMDLLRAVIIGAEGTPYHDGLFFFDIQFPDTYPSVPPNVHYHSGGLRINPNLYNCGKVCLSLLGTWAGSAREKWLPNESTMLQLLVSIQALILNEKPYFNEPGYVQSAGTASGESKSKVYSENVFLLSLKTMVYSIRRPPQHFEEYVQNHYFVRSHDIVKACNAYKAGAPLGSMVKGGVQDLEEARQSGSKKFKTDVASFMQTVVDEFVKLGVKELAEKPEPPMSNANTENQSKKKTRKRSRSSR</sequence>
<protein>
    <recommendedName>
        <fullName>Probable ubiquitin-conjugating enzyme E2 26</fullName>
        <ecNumber>2.3.2.23</ecNumber>
    </recommendedName>
    <alternativeName>
        <fullName>E2 ubiquitin-conjugating enzyme 26</fullName>
    </alternativeName>
    <alternativeName>
        <fullName>Ubiquitin carrier protein 26</fullName>
    </alternativeName>
</protein>
<keyword id="KW-0067">ATP-binding</keyword>
<keyword id="KW-0547">Nucleotide-binding</keyword>
<keyword id="KW-1185">Reference proteome</keyword>
<keyword id="KW-0808">Transferase</keyword>
<keyword id="KW-0833">Ubl conjugation pathway</keyword>
<comment type="function">
    <text evidence="1">Accepts the ubiquitin from the E1 complex and catalyzes its covalent attachment to other proteins.</text>
</comment>
<comment type="catalytic activity">
    <reaction evidence="2">
        <text>S-ubiquitinyl-[E1 ubiquitin-activating enzyme]-L-cysteine + [E2 ubiquitin-conjugating enzyme]-L-cysteine = [E1 ubiquitin-activating enzyme]-L-cysteine + S-ubiquitinyl-[E2 ubiquitin-conjugating enzyme]-L-cysteine.</text>
        <dbReference type="EC" id="2.3.2.23"/>
    </reaction>
</comment>
<comment type="pathway">
    <text evidence="2">Protein modification; protein ubiquitination.</text>
</comment>
<comment type="similarity">
    <text evidence="2">Belongs to the ubiquitin-conjugating enzyme family.</text>
</comment>
<feature type="chain" id="PRO_0000345191" description="Probable ubiquitin-conjugating enzyme E2 26">
    <location>
        <begin position="1"/>
        <end position="543"/>
    </location>
</feature>
<feature type="domain" description="UBC core" evidence="2">
    <location>
        <begin position="271"/>
        <end position="431"/>
    </location>
</feature>
<feature type="region of interest" description="Disordered" evidence="3">
    <location>
        <begin position="1"/>
        <end position="21"/>
    </location>
</feature>
<feature type="region of interest" description="Disordered" evidence="3">
    <location>
        <begin position="514"/>
        <end position="543"/>
    </location>
</feature>
<feature type="compositionally biased region" description="Basic residues" evidence="3">
    <location>
        <begin position="532"/>
        <end position="543"/>
    </location>
</feature>
<feature type="active site" description="Glycyl thioester intermediate" evidence="2">
    <location>
        <position position="357"/>
    </location>
</feature>
<feature type="sequence conflict" description="In Ref. 4; BAC42437 and 5; AAO64853." evidence="4" ref="4 5">
    <original>K</original>
    <variation>E</variation>
    <location>
        <position position="118"/>
    </location>
</feature>
<dbReference type="EC" id="2.3.2.23"/>
<dbReference type="EMBL" id="DQ027039">
    <property type="protein sequence ID" value="AAY44865.1"/>
    <property type="molecule type" value="mRNA"/>
</dbReference>
<dbReference type="EMBL" id="AC022520">
    <property type="protein sequence ID" value="AAF87864.1"/>
    <property type="molecule type" value="Genomic_DNA"/>
</dbReference>
<dbReference type="EMBL" id="CP002684">
    <property type="protein sequence ID" value="AEE32878.1"/>
    <property type="molecule type" value="Genomic_DNA"/>
</dbReference>
<dbReference type="EMBL" id="AK117792">
    <property type="protein sequence ID" value="BAC42437.1"/>
    <property type="molecule type" value="mRNA"/>
</dbReference>
<dbReference type="EMBL" id="BT005918">
    <property type="protein sequence ID" value="AAO64853.1"/>
    <property type="molecule type" value="mRNA"/>
</dbReference>
<dbReference type="EMBL" id="AK176042">
    <property type="protein sequence ID" value="BAD43805.1"/>
    <property type="molecule type" value="mRNA"/>
</dbReference>
<dbReference type="PIR" id="G96570">
    <property type="entry name" value="G96570"/>
</dbReference>
<dbReference type="RefSeq" id="NP_001185207.1">
    <property type="nucleotide sequence ID" value="NM_001198278.2"/>
</dbReference>
<dbReference type="SMR" id="Q8GY87"/>
<dbReference type="FunCoup" id="Q8GY87">
    <property type="interactions" value="356"/>
</dbReference>
<dbReference type="IntAct" id="Q8GY87">
    <property type="interactions" value="3"/>
</dbReference>
<dbReference type="STRING" id="3702.Q8GY87"/>
<dbReference type="PaxDb" id="3702-AT1G53025.1"/>
<dbReference type="EnsemblPlants" id="AT1G53025.1">
    <property type="protein sequence ID" value="AT1G53025.1"/>
    <property type="gene ID" value="AT1G53025"/>
</dbReference>
<dbReference type="GeneID" id="10723113"/>
<dbReference type="Gramene" id="AT1G53025.1">
    <property type="protein sequence ID" value="AT1G53025.1"/>
    <property type="gene ID" value="AT1G53025"/>
</dbReference>
<dbReference type="KEGG" id="ath:AT1G53025"/>
<dbReference type="Araport" id="AT1G53025"/>
<dbReference type="TAIR" id="AT1G53025">
    <property type="gene designation" value="UBC26"/>
</dbReference>
<dbReference type="eggNOG" id="KOG0895">
    <property type="taxonomic scope" value="Eukaryota"/>
</dbReference>
<dbReference type="HOGENOM" id="CLU_025097_5_1_1"/>
<dbReference type="InParanoid" id="Q8GY87"/>
<dbReference type="OMA" id="THFEEFV"/>
<dbReference type="UniPathway" id="UPA00143"/>
<dbReference type="PRO" id="PR:Q8GY87"/>
<dbReference type="Proteomes" id="UP000006548">
    <property type="component" value="Chromosome 1"/>
</dbReference>
<dbReference type="ExpressionAtlas" id="Q8GY87">
    <property type="expression patterns" value="baseline and differential"/>
</dbReference>
<dbReference type="GO" id="GO:0005524">
    <property type="term" value="F:ATP binding"/>
    <property type="evidence" value="ECO:0007669"/>
    <property type="project" value="UniProtKB-KW"/>
</dbReference>
<dbReference type="GO" id="GO:0061631">
    <property type="term" value="F:ubiquitin conjugating enzyme activity"/>
    <property type="evidence" value="ECO:0007669"/>
    <property type="project" value="UniProtKB-EC"/>
</dbReference>
<dbReference type="GO" id="GO:0016567">
    <property type="term" value="P:protein ubiquitination"/>
    <property type="evidence" value="ECO:0007669"/>
    <property type="project" value="UniProtKB-UniPathway"/>
</dbReference>
<dbReference type="CDD" id="cd23837">
    <property type="entry name" value="UBCc_UBE2O"/>
    <property type="match status" value="1"/>
</dbReference>
<dbReference type="FunFam" id="3.10.110.10:FF:000028">
    <property type="entry name" value="Probable ubiquitin-conjugating enzyme E2 23"/>
    <property type="match status" value="1"/>
</dbReference>
<dbReference type="Gene3D" id="3.10.110.10">
    <property type="entry name" value="Ubiquitin Conjugating Enzyme"/>
    <property type="match status" value="1"/>
</dbReference>
<dbReference type="InterPro" id="IPR000608">
    <property type="entry name" value="UBQ-conjugat_E2_core"/>
</dbReference>
<dbReference type="InterPro" id="IPR016135">
    <property type="entry name" value="UBQ-conjugating_enzyme/RWD"/>
</dbReference>
<dbReference type="PANTHER" id="PTHR46116">
    <property type="entry name" value="(E3-INDEPENDENT) E2 UBIQUITIN-CONJUGATING ENZYME"/>
    <property type="match status" value="1"/>
</dbReference>
<dbReference type="PANTHER" id="PTHR46116:SF22">
    <property type="entry name" value="UBIQUITIN-CONJUGATING ENZYME E2 26-RELATED"/>
    <property type="match status" value="1"/>
</dbReference>
<dbReference type="Pfam" id="PF00179">
    <property type="entry name" value="UQ_con"/>
    <property type="match status" value="1"/>
</dbReference>
<dbReference type="SMART" id="SM00212">
    <property type="entry name" value="UBCc"/>
    <property type="match status" value="1"/>
</dbReference>
<dbReference type="SUPFAM" id="SSF54495">
    <property type="entry name" value="UBC-like"/>
    <property type="match status" value="1"/>
</dbReference>
<dbReference type="PROSITE" id="PS50127">
    <property type="entry name" value="UBC_2"/>
    <property type="match status" value="1"/>
</dbReference>
<reference key="1">
    <citation type="journal article" date="2005" name="Plant Physiol.">
        <title>Genome analysis and functional characterization of the E2 and RING-type E3 ligase ubiquitination enzymes of Arabidopsis.</title>
        <authorList>
            <person name="Kraft E."/>
            <person name="Stone S.L."/>
            <person name="Ma L."/>
            <person name="Su N."/>
            <person name="Gao Y."/>
            <person name="Lau O.-S."/>
            <person name="Deng X.-W."/>
            <person name="Callis J."/>
        </authorList>
    </citation>
    <scope>NUCLEOTIDE SEQUENCE [MRNA]</scope>
    <scope>GENE FAMILY</scope>
    <scope>NOMENCLATURE</scope>
</reference>
<reference key="2">
    <citation type="journal article" date="2000" name="Nature">
        <title>Sequence and analysis of chromosome 1 of the plant Arabidopsis thaliana.</title>
        <authorList>
            <person name="Theologis A."/>
            <person name="Ecker J.R."/>
            <person name="Palm C.J."/>
            <person name="Federspiel N.A."/>
            <person name="Kaul S."/>
            <person name="White O."/>
            <person name="Alonso J."/>
            <person name="Altafi H."/>
            <person name="Araujo R."/>
            <person name="Bowman C.L."/>
            <person name="Brooks S.Y."/>
            <person name="Buehler E."/>
            <person name="Chan A."/>
            <person name="Chao Q."/>
            <person name="Chen H."/>
            <person name="Cheuk R.F."/>
            <person name="Chin C.W."/>
            <person name="Chung M.K."/>
            <person name="Conn L."/>
            <person name="Conway A.B."/>
            <person name="Conway A.R."/>
            <person name="Creasy T.H."/>
            <person name="Dewar K."/>
            <person name="Dunn P."/>
            <person name="Etgu P."/>
            <person name="Feldblyum T.V."/>
            <person name="Feng J.-D."/>
            <person name="Fong B."/>
            <person name="Fujii C.Y."/>
            <person name="Gill J.E."/>
            <person name="Goldsmith A.D."/>
            <person name="Haas B."/>
            <person name="Hansen N.F."/>
            <person name="Hughes B."/>
            <person name="Huizar L."/>
            <person name="Hunter J.L."/>
            <person name="Jenkins J."/>
            <person name="Johnson-Hopson C."/>
            <person name="Khan S."/>
            <person name="Khaykin E."/>
            <person name="Kim C.J."/>
            <person name="Koo H.L."/>
            <person name="Kremenetskaia I."/>
            <person name="Kurtz D.B."/>
            <person name="Kwan A."/>
            <person name="Lam B."/>
            <person name="Langin-Hooper S."/>
            <person name="Lee A."/>
            <person name="Lee J.M."/>
            <person name="Lenz C.A."/>
            <person name="Li J.H."/>
            <person name="Li Y.-P."/>
            <person name="Lin X."/>
            <person name="Liu S.X."/>
            <person name="Liu Z.A."/>
            <person name="Luros J.S."/>
            <person name="Maiti R."/>
            <person name="Marziali A."/>
            <person name="Militscher J."/>
            <person name="Miranda M."/>
            <person name="Nguyen M."/>
            <person name="Nierman W.C."/>
            <person name="Osborne B.I."/>
            <person name="Pai G."/>
            <person name="Peterson J."/>
            <person name="Pham P.K."/>
            <person name="Rizzo M."/>
            <person name="Rooney T."/>
            <person name="Rowley D."/>
            <person name="Sakano H."/>
            <person name="Salzberg S.L."/>
            <person name="Schwartz J.R."/>
            <person name="Shinn P."/>
            <person name="Southwick A.M."/>
            <person name="Sun H."/>
            <person name="Tallon L.J."/>
            <person name="Tambunga G."/>
            <person name="Toriumi M.J."/>
            <person name="Town C.D."/>
            <person name="Utterback T."/>
            <person name="Van Aken S."/>
            <person name="Vaysberg M."/>
            <person name="Vysotskaia V.S."/>
            <person name="Walker M."/>
            <person name="Wu D."/>
            <person name="Yu G."/>
            <person name="Fraser C.M."/>
            <person name="Venter J.C."/>
            <person name="Davis R.W."/>
        </authorList>
    </citation>
    <scope>NUCLEOTIDE SEQUENCE [LARGE SCALE GENOMIC DNA]</scope>
    <source>
        <strain>cv. Columbia</strain>
    </source>
</reference>
<reference key="3">
    <citation type="journal article" date="2017" name="Plant J.">
        <title>Araport11: a complete reannotation of the Arabidopsis thaliana reference genome.</title>
        <authorList>
            <person name="Cheng C.Y."/>
            <person name="Krishnakumar V."/>
            <person name="Chan A.P."/>
            <person name="Thibaud-Nissen F."/>
            <person name="Schobel S."/>
            <person name="Town C.D."/>
        </authorList>
    </citation>
    <scope>GENOME REANNOTATION</scope>
    <source>
        <strain>cv. Columbia</strain>
    </source>
</reference>
<reference key="4">
    <citation type="journal article" date="2002" name="Science">
        <title>Functional annotation of a full-length Arabidopsis cDNA collection.</title>
        <authorList>
            <person name="Seki M."/>
            <person name="Narusaka M."/>
            <person name="Kamiya A."/>
            <person name="Ishida J."/>
            <person name="Satou M."/>
            <person name="Sakurai T."/>
            <person name="Nakajima M."/>
            <person name="Enju A."/>
            <person name="Akiyama K."/>
            <person name="Oono Y."/>
            <person name="Muramatsu M."/>
            <person name="Hayashizaki Y."/>
            <person name="Kawai J."/>
            <person name="Carninci P."/>
            <person name="Itoh M."/>
            <person name="Ishii Y."/>
            <person name="Arakawa T."/>
            <person name="Shibata K."/>
            <person name="Shinagawa A."/>
            <person name="Shinozaki K."/>
        </authorList>
    </citation>
    <scope>NUCLEOTIDE SEQUENCE [LARGE SCALE MRNA]</scope>
    <source>
        <strain>cv. Columbia</strain>
    </source>
</reference>
<reference key="5">
    <citation type="journal article" date="2003" name="Science">
        <title>Empirical analysis of transcriptional activity in the Arabidopsis genome.</title>
        <authorList>
            <person name="Yamada K."/>
            <person name="Lim J."/>
            <person name="Dale J.M."/>
            <person name="Chen H."/>
            <person name="Shinn P."/>
            <person name="Palm C.J."/>
            <person name="Southwick A.M."/>
            <person name="Wu H.C."/>
            <person name="Kim C.J."/>
            <person name="Nguyen M."/>
            <person name="Pham P.K."/>
            <person name="Cheuk R.F."/>
            <person name="Karlin-Newmann G."/>
            <person name="Liu S.X."/>
            <person name="Lam B."/>
            <person name="Sakano H."/>
            <person name="Wu T."/>
            <person name="Yu G."/>
            <person name="Miranda M."/>
            <person name="Quach H.L."/>
            <person name="Tripp M."/>
            <person name="Chang C.H."/>
            <person name="Lee J.M."/>
            <person name="Toriumi M.J."/>
            <person name="Chan M.M."/>
            <person name="Tang C.C."/>
            <person name="Onodera C.S."/>
            <person name="Deng J.M."/>
            <person name="Akiyama K."/>
            <person name="Ansari Y."/>
            <person name="Arakawa T."/>
            <person name="Banh J."/>
            <person name="Banno F."/>
            <person name="Bowser L."/>
            <person name="Brooks S.Y."/>
            <person name="Carninci P."/>
            <person name="Chao Q."/>
            <person name="Choy N."/>
            <person name="Enju A."/>
            <person name="Goldsmith A.D."/>
            <person name="Gurjal M."/>
            <person name="Hansen N.F."/>
            <person name="Hayashizaki Y."/>
            <person name="Johnson-Hopson C."/>
            <person name="Hsuan V.W."/>
            <person name="Iida K."/>
            <person name="Karnes M."/>
            <person name="Khan S."/>
            <person name="Koesema E."/>
            <person name="Ishida J."/>
            <person name="Jiang P.X."/>
            <person name="Jones T."/>
            <person name="Kawai J."/>
            <person name="Kamiya A."/>
            <person name="Meyers C."/>
            <person name="Nakajima M."/>
            <person name="Narusaka M."/>
            <person name="Seki M."/>
            <person name="Sakurai T."/>
            <person name="Satou M."/>
            <person name="Tamse R."/>
            <person name="Vaysberg M."/>
            <person name="Wallender E.K."/>
            <person name="Wong C."/>
            <person name="Yamamura Y."/>
            <person name="Yuan S."/>
            <person name="Shinozaki K."/>
            <person name="Davis R.W."/>
            <person name="Theologis A."/>
            <person name="Ecker J.R."/>
        </authorList>
    </citation>
    <scope>NUCLEOTIDE SEQUENCE [LARGE SCALE MRNA]</scope>
    <source>
        <strain>cv. Columbia</strain>
    </source>
</reference>
<reference key="6">
    <citation type="submission" date="2004-09" db="EMBL/GenBank/DDBJ databases">
        <title>Large-scale analysis of RIKEN Arabidopsis full-length (RAFL) cDNAs.</title>
        <authorList>
            <person name="Totoki Y."/>
            <person name="Seki M."/>
            <person name="Ishida J."/>
            <person name="Nakajima M."/>
            <person name="Enju A."/>
            <person name="Kamiya A."/>
            <person name="Narusaka M."/>
            <person name="Shin-i T."/>
            <person name="Nakagawa M."/>
            <person name="Sakamoto N."/>
            <person name="Oishi K."/>
            <person name="Kohara Y."/>
            <person name="Kobayashi M."/>
            <person name="Toyoda A."/>
            <person name="Sakaki Y."/>
            <person name="Sakurai T."/>
            <person name="Iida K."/>
            <person name="Akiyama K."/>
            <person name="Satou M."/>
            <person name="Toyoda T."/>
            <person name="Konagaya A."/>
            <person name="Carninci P."/>
            <person name="Kawai J."/>
            <person name="Hayashizaki Y."/>
            <person name="Shinozaki K."/>
        </authorList>
    </citation>
    <scope>NUCLEOTIDE SEQUENCE [LARGE SCALE MRNA]</scope>
    <source>
        <strain>cv. Columbia</strain>
    </source>
</reference>
<accession>Q8GY87</accession>
<accession>Q9LNM8</accession>
<proteinExistence type="evidence at transcript level"/>
<organism>
    <name type="scientific">Arabidopsis thaliana</name>
    <name type="common">Mouse-ear cress</name>
    <dbReference type="NCBI Taxonomy" id="3702"/>
    <lineage>
        <taxon>Eukaryota</taxon>
        <taxon>Viridiplantae</taxon>
        <taxon>Streptophyta</taxon>
        <taxon>Embryophyta</taxon>
        <taxon>Tracheophyta</taxon>
        <taxon>Spermatophyta</taxon>
        <taxon>Magnoliopsida</taxon>
        <taxon>eudicotyledons</taxon>
        <taxon>Gunneridae</taxon>
        <taxon>Pentapetalae</taxon>
        <taxon>rosids</taxon>
        <taxon>malvids</taxon>
        <taxon>Brassicales</taxon>
        <taxon>Brassicaceae</taxon>
        <taxon>Camelineae</taxon>
        <taxon>Arabidopsis</taxon>
    </lineage>
</organism>
<name>UBC26_ARATH</name>